<comment type="function">
    <text evidence="1">Required for accurate and efficient protein synthesis under certain stress conditions. May act as a fidelity factor of the translation reaction, by catalyzing a one-codon backward translocation of tRNAs on improperly translocated ribosomes. Back-translocation proceeds from a post-translocation (POST) complex to a pre-translocation (PRE) complex, thus giving elongation factor G a second chance to translocate the tRNAs correctly. Binds to ribosomes in a GTP-dependent manner.</text>
</comment>
<comment type="catalytic activity">
    <reaction evidence="1">
        <text>GTP + H2O = GDP + phosphate + H(+)</text>
        <dbReference type="Rhea" id="RHEA:19669"/>
        <dbReference type="ChEBI" id="CHEBI:15377"/>
        <dbReference type="ChEBI" id="CHEBI:15378"/>
        <dbReference type="ChEBI" id="CHEBI:37565"/>
        <dbReference type="ChEBI" id="CHEBI:43474"/>
        <dbReference type="ChEBI" id="CHEBI:58189"/>
        <dbReference type="EC" id="3.6.5.n1"/>
    </reaction>
</comment>
<comment type="subcellular location">
    <subcellularLocation>
        <location evidence="1">Cell membrane</location>
        <topology evidence="1">Peripheral membrane protein</topology>
        <orientation evidence="1">Cytoplasmic side</orientation>
    </subcellularLocation>
</comment>
<comment type="similarity">
    <text evidence="1">Belongs to the TRAFAC class translation factor GTPase superfamily. Classic translation factor GTPase family. LepA subfamily.</text>
</comment>
<proteinExistence type="inferred from homology"/>
<dbReference type="EC" id="3.6.5.n1" evidence="1"/>
<dbReference type="EMBL" id="AE017308">
    <property type="protein sequence ID" value="AAT27889.1"/>
    <property type="molecule type" value="Genomic_DNA"/>
</dbReference>
<dbReference type="RefSeq" id="WP_011264923.1">
    <property type="nucleotide sequence ID" value="NC_006908.1"/>
</dbReference>
<dbReference type="SMR" id="Q6KHP1"/>
<dbReference type="STRING" id="267748.MMOB4030"/>
<dbReference type="KEGG" id="mmo:MMOB4030"/>
<dbReference type="eggNOG" id="COG0481">
    <property type="taxonomic scope" value="Bacteria"/>
</dbReference>
<dbReference type="HOGENOM" id="CLU_009995_3_3_14"/>
<dbReference type="OrthoDB" id="9804431at2"/>
<dbReference type="Proteomes" id="UP000009072">
    <property type="component" value="Chromosome"/>
</dbReference>
<dbReference type="GO" id="GO:0005886">
    <property type="term" value="C:plasma membrane"/>
    <property type="evidence" value="ECO:0007669"/>
    <property type="project" value="UniProtKB-SubCell"/>
</dbReference>
<dbReference type="GO" id="GO:0005525">
    <property type="term" value="F:GTP binding"/>
    <property type="evidence" value="ECO:0007669"/>
    <property type="project" value="UniProtKB-UniRule"/>
</dbReference>
<dbReference type="GO" id="GO:0003924">
    <property type="term" value="F:GTPase activity"/>
    <property type="evidence" value="ECO:0007669"/>
    <property type="project" value="UniProtKB-UniRule"/>
</dbReference>
<dbReference type="GO" id="GO:0043022">
    <property type="term" value="F:ribosome binding"/>
    <property type="evidence" value="ECO:0007669"/>
    <property type="project" value="UniProtKB-UniRule"/>
</dbReference>
<dbReference type="GO" id="GO:0003746">
    <property type="term" value="F:translation elongation factor activity"/>
    <property type="evidence" value="ECO:0007669"/>
    <property type="project" value="UniProtKB-UniRule"/>
</dbReference>
<dbReference type="GO" id="GO:0045727">
    <property type="term" value="P:positive regulation of translation"/>
    <property type="evidence" value="ECO:0007669"/>
    <property type="project" value="UniProtKB-UniRule"/>
</dbReference>
<dbReference type="CDD" id="cd03699">
    <property type="entry name" value="EF4_II"/>
    <property type="match status" value="1"/>
</dbReference>
<dbReference type="CDD" id="cd16260">
    <property type="entry name" value="EF4_III"/>
    <property type="match status" value="1"/>
</dbReference>
<dbReference type="CDD" id="cd01890">
    <property type="entry name" value="LepA"/>
    <property type="match status" value="1"/>
</dbReference>
<dbReference type="CDD" id="cd03709">
    <property type="entry name" value="lepA_C"/>
    <property type="match status" value="1"/>
</dbReference>
<dbReference type="FunFam" id="3.40.50.300:FF:000078">
    <property type="entry name" value="Elongation factor 4"/>
    <property type="match status" value="1"/>
</dbReference>
<dbReference type="FunFam" id="2.40.30.10:FF:000015">
    <property type="entry name" value="Translation factor GUF1, mitochondrial"/>
    <property type="match status" value="1"/>
</dbReference>
<dbReference type="FunFam" id="3.30.70.240:FF:000007">
    <property type="entry name" value="Translation factor GUF1, mitochondrial"/>
    <property type="match status" value="1"/>
</dbReference>
<dbReference type="FunFam" id="3.30.70.2570:FF:000001">
    <property type="entry name" value="Translation factor GUF1, mitochondrial"/>
    <property type="match status" value="1"/>
</dbReference>
<dbReference type="FunFam" id="3.30.70.870:FF:000004">
    <property type="entry name" value="Translation factor GUF1, mitochondrial"/>
    <property type="match status" value="1"/>
</dbReference>
<dbReference type="Gene3D" id="3.30.70.240">
    <property type="match status" value="1"/>
</dbReference>
<dbReference type="Gene3D" id="3.30.70.2570">
    <property type="entry name" value="Elongation factor 4, C-terminal domain"/>
    <property type="match status" value="1"/>
</dbReference>
<dbReference type="Gene3D" id="3.30.70.870">
    <property type="entry name" value="Elongation Factor G (Translational Gtpase), domain 3"/>
    <property type="match status" value="1"/>
</dbReference>
<dbReference type="Gene3D" id="3.40.50.300">
    <property type="entry name" value="P-loop containing nucleotide triphosphate hydrolases"/>
    <property type="match status" value="1"/>
</dbReference>
<dbReference type="Gene3D" id="2.40.30.10">
    <property type="entry name" value="Translation factors"/>
    <property type="match status" value="1"/>
</dbReference>
<dbReference type="HAMAP" id="MF_00071">
    <property type="entry name" value="LepA"/>
    <property type="match status" value="1"/>
</dbReference>
<dbReference type="InterPro" id="IPR006297">
    <property type="entry name" value="EF-4"/>
</dbReference>
<dbReference type="InterPro" id="IPR035647">
    <property type="entry name" value="EFG_III/V"/>
</dbReference>
<dbReference type="InterPro" id="IPR000640">
    <property type="entry name" value="EFG_V-like"/>
</dbReference>
<dbReference type="InterPro" id="IPR004161">
    <property type="entry name" value="EFTu-like_2"/>
</dbReference>
<dbReference type="InterPro" id="IPR031157">
    <property type="entry name" value="G_TR_CS"/>
</dbReference>
<dbReference type="InterPro" id="IPR038363">
    <property type="entry name" value="LepA_C_sf"/>
</dbReference>
<dbReference type="InterPro" id="IPR013842">
    <property type="entry name" value="LepA_CTD"/>
</dbReference>
<dbReference type="InterPro" id="IPR035654">
    <property type="entry name" value="LepA_IV"/>
</dbReference>
<dbReference type="InterPro" id="IPR027417">
    <property type="entry name" value="P-loop_NTPase"/>
</dbReference>
<dbReference type="InterPro" id="IPR005225">
    <property type="entry name" value="Small_GTP-bd"/>
</dbReference>
<dbReference type="InterPro" id="IPR000795">
    <property type="entry name" value="T_Tr_GTP-bd_dom"/>
</dbReference>
<dbReference type="InterPro" id="IPR009000">
    <property type="entry name" value="Transl_B-barrel_sf"/>
</dbReference>
<dbReference type="NCBIfam" id="TIGR01393">
    <property type="entry name" value="lepA"/>
    <property type="match status" value="1"/>
</dbReference>
<dbReference type="NCBIfam" id="TIGR00231">
    <property type="entry name" value="small_GTP"/>
    <property type="match status" value="1"/>
</dbReference>
<dbReference type="PANTHER" id="PTHR43512:SF4">
    <property type="entry name" value="TRANSLATION FACTOR GUF1 HOMOLOG, CHLOROPLASTIC"/>
    <property type="match status" value="1"/>
</dbReference>
<dbReference type="PANTHER" id="PTHR43512">
    <property type="entry name" value="TRANSLATION FACTOR GUF1-RELATED"/>
    <property type="match status" value="1"/>
</dbReference>
<dbReference type="Pfam" id="PF00679">
    <property type="entry name" value="EFG_C"/>
    <property type="match status" value="1"/>
</dbReference>
<dbReference type="Pfam" id="PF00009">
    <property type="entry name" value="GTP_EFTU"/>
    <property type="match status" value="1"/>
</dbReference>
<dbReference type="Pfam" id="PF03144">
    <property type="entry name" value="GTP_EFTU_D2"/>
    <property type="match status" value="1"/>
</dbReference>
<dbReference type="Pfam" id="PF06421">
    <property type="entry name" value="LepA_C"/>
    <property type="match status" value="1"/>
</dbReference>
<dbReference type="PRINTS" id="PR00315">
    <property type="entry name" value="ELONGATNFCT"/>
</dbReference>
<dbReference type="SMART" id="SM00838">
    <property type="entry name" value="EFG_C"/>
    <property type="match status" value="1"/>
</dbReference>
<dbReference type="SUPFAM" id="SSF54980">
    <property type="entry name" value="EF-G C-terminal domain-like"/>
    <property type="match status" value="2"/>
</dbReference>
<dbReference type="SUPFAM" id="SSF52540">
    <property type="entry name" value="P-loop containing nucleoside triphosphate hydrolases"/>
    <property type="match status" value="1"/>
</dbReference>
<dbReference type="SUPFAM" id="SSF50447">
    <property type="entry name" value="Translation proteins"/>
    <property type="match status" value="1"/>
</dbReference>
<dbReference type="PROSITE" id="PS00301">
    <property type="entry name" value="G_TR_1"/>
    <property type="match status" value="1"/>
</dbReference>
<dbReference type="PROSITE" id="PS51722">
    <property type="entry name" value="G_TR_2"/>
    <property type="match status" value="1"/>
</dbReference>
<keyword id="KW-1003">Cell membrane</keyword>
<keyword id="KW-0342">GTP-binding</keyword>
<keyword id="KW-0378">Hydrolase</keyword>
<keyword id="KW-0472">Membrane</keyword>
<keyword id="KW-0547">Nucleotide-binding</keyword>
<keyword id="KW-0648">Protein biosynthesis</keyword>
<keyword id="KW-1185">Reference proteome</keyword>
<gene>
    <name evidence="1" type="primary">lepA</name>
    <name type="ordered locus">MMOB4030</name>
</gene>
<organism>
    <name type="scientific">Mycoplasma mobile (strain ATCC 43663 / 163K / NCTC 11711)</name>
    <name type="common">Mesomycoplasma mobile</name>
    <dbReference type="NCBI Taxonomy" id="267748"/>
    <lineage>
        <taxon>Bacteria</taxon>
        <taxon>Bacillati</taxon>
        <taxon>Mycoplasmatota</taxon>
        <taxon>Mycoplasmoidales</taxon>
        <taxon>Metamycoplasmataceae</taxon>
        <taxon>Mesomycoplasma</taxon>
    </lineage>
</organism>
<accession>Q6KHP1</accession>
<reference key="1">
    <citation type="journal article" date="2004" name="Genome Res.">
        <title>The complete genome and proteome of Mycoplasma mobile.</title>
        <authorList>
            <person name="Jaffe J.D."/>
            <person name="Stange-Thomann N."/>
            <person name="Smith C."/>
            <person name="DeCaprio D."/>
            <person name="Fisher S."/>
            <person name="Butler J."/>
            <person name="Calvo S."/>
            <person name="Elkins T."/>
            <person name="FitzGerald M.G."/>
            <person name="Hafez N."/>
            <person name="Kodira C.D."/>
            <person name="Major J."/>
            <person name="Wang S."/>
            <person name="Wilkinson J."/>
            <person name="Nicol R."/>
            <person name="Nusbaum C."/>
            <person name="Birren B."/>
            <person name="Berg H.C."/>
            <person name="Church G.M."/>
        </authorList>
    </citation>
    <scope>NUCLEOTIDE SEQUENCE [LARGE SCALE GENOMIC DNA]</scope>
    <source>
        <strain>ATCC 43663 / NCTC 11711 / 163 K</strain>
    </source>
</reference>
<protein>
    <recommendedName>
        <fullName evidence="1">Elongation factor 4</fullName>
        <shortName evidence="1">EF-4</shortName>
        <ecNumber evidence="1">3.6.5.n1</ecNumber>
    </recommendedName>
    <alternativeName>
        <fullName evidence="1">Ribosomal back-translocase LepA</fullName>
    </alternativeName>
</protein>
<evidence type="ECO:0000255" key="1">
    <source>
        <dbReference type="HAMAP-Rule" id="MF_00071"/>
    </source>
</evidence>
<sequence length="598" mass="67286">MDKSKIRNFSIIAHIDHGKSTLADRILELTETVEKRDLKAQHLDSMDLEKERGITIKLNAVQIKYKDYVFHLIDTPGHVDFTYEVSRSLAASEGAILLVDATQGIEAQTLANVYLAMDNGLEIIPVINKIDLPSSDPEAVKKEIEEVIGIDASDAILISAKTGKNIEDVLKAVIEKIPAPKNADDNKPLKALVFDSYYDQYRGVVLLIRIFEGKIKVGDEFFFMQSKNKFHATELGVRKPVELKKDSLEAGEVGWLSASIRNAKDVSVGDTITLYNNPTEKPLQGYKKLKPVVYTGFFPIDSQDYDDLKESLIKISLSDSSISFEPETSKALGFGFRVGFLGMLHMEILQERLSREFNIDLIATAPSVEFHVTTTNGEMLSISNPSLLPEKNYIQKIEEPYIKASIILPKEYVGAVMEMCQGKRGVYQDLEFLDENRRRLVYNLPLSEIVFDFFDRLKSLTKGYASFDYEIIGYLESDLIKVDVLLNGEKIDALAIIVHKDFAYSRGRDLTVKLKEVIPRQNFEIPVQAAIGAKVIARETIKAYRKDVTAKLYGGDVTRRQKLLKKQKAGKKRMKSIGSVEIPQEAFLAILETDVTKK</sequence>
<name>LEPA_MYCM1</name>
<feature type="chain" id="PRO_0000176301" description="Elongation factor 4">
    <location>
        <begin position="1"/>
        <end position="598"/>
    </location>
</feature>
<feature type="domain" description="tr-type G">
    <location>
        <begin position="4"/>
        <end position="181"/>
    </location>
</feature>
<feature type="binding site" evidence="1">
    <location>
        <begin position="16"/>
        <end position="21"/>
    </location>
    <ligand>
        <name>GTP</name>
        <dbReference type="ChEBI" id="CHEBI:37565"/>
    </ligand>
</feature>
<feature type="binding site" evidence="1">
    <location>
        <begin position="128"/>
        <end position="131"/>
    </location>
    <ligand>
        <name>GTP</name>
        <dbReference type="ChEBI" id="CHEBI:37565"/>
    </ligand>
</feature>